<protein>
    <recommendedName>
        <fullName>WD repeat-containing protein 70</fullName>
    </recommendedName>
</protein>
<name>WDR70_XENLA</name>
<gene>
    <name type="primary">wdr70</name>
</gene>
<dbReference type="EMBL" id="BC073073">
    <property type="protein sequence ID" value="AAH73073.1"/>
    <property type="status" value="ALT_INIT"/>
    <property type="molecule type" value="mRNA"/>
</dbReference>
<dbReference type="RefSeq" id="NP_001085643.2">
    <property type="nucleotide sequence ID" value="NM_001092174.1"/>
</dbReference>
<dbReference type="SMR" id="Q6GPP0"/>
<dbReference type="GeneID" id="444069"/>
<dbReference type="KEGG" id="xla:444069"/>
<dbReference type="AGR" id="Xenbase:XB-GENE-956092"/>
<dbReference type="CTD" id="444069"/>
<dbReference type="Xenbase" id="XB-GENE-956092">
    <property type="gene designation" value="wdr70.L"/>
</dbReference>
<dbReference type="OrthoDB" id="10264376at2759"/>
<dbReference type="Proteomes" id="UP000186698">
    <property type="component" value="Chromosome 1L"/>
</dbReference>
<dbReference type="Bgee" id="444069">
    <property type="expression patterns" value="Expressed in liver and 19 other cell types or tissues"/>
</dbReference>
<dbReference type="GO" id="GO:0005634">
    <property type="term" value="C:nucleus"/>
    <property type="evidence" value="ECO:0000318"/>
    <property type="project" value="GO_Central"/>
</dbReference>
<dbReference type="GO" id="GO:0035861">
    <property type="term" value="C:site of double-strand break"/>
    <property type="evidence" value="ECO:0000318"/>
    <property type="project" value="GO_Central"/>
</dbReference>
<dbReference type="FunFam" id="2.130.10.10:FF:002005">
    <property type="entry name" value="WD repeat domain 70"/>
    <property type="match status" value="1"/>
</dbReference>
<dbReference type="FunFam" id="2.130.10.10:FF:000294">
    <property type="entry name" value="WD repeat-containing protein 70"/>
    <property type="match status" value="1"/>
</dbReference>
<dbReference type="Gene3D" id="2.130.10.10">
    <property type="entry name" value="YVTN repeat-like/Quinoprotein amine dehydrogenase"/>
    <property type="match status" value="2"/>
</dbReference>
<dbReference type="InterPro" id="IPR020472">
    <property type="entry name" value="G-protein_beta_WD-40_rep"/>
</dbReference>
<dbReference type="InterPro" id="IPR015943">
    <property type="entry name" value="WD40/YVTN_repeat-like_dom_sf"/>
</dbReference>
<dbReference type="InterPro" id="IPR036322">
    <property type="entry name" value="WD40_repeat_dom_sf"/>
</dbReference>
<dbReference type="InterPro" id="IPR001680">
    <property type="entry name" value="WD40_rpt"/>
</dbReference>
<dbReference type="InterPro" id="IPR051858">
    <property type="entry name" value="WD_repeat_GAD-1"/>
</dbReference>
<dbReference type="PANTHER" id="PTHR16017">
    <property type="entry name" value="GASTRULATION DEFECTIVE PROTEIN 1-RELATED"/>
    <property type="match status" value="1"/>
</dbReference>
<dbReference type="PANTHER" id="PTHR16017:SF0">
    <property type="entry name" value="WD REPEAT-CONTAINING PROTEIN 70"/>
    <property type="match status" value="1"/>
</dbReference>
<dbReference type="Pfam" id="PF00400">
    <property type="entry name" value="WD40"/>
    <property type="match status" value="3"/>
</dbReference>
<dbReference type="PRINTS" id="PR00320">
    <property type="entry name" value="GPROTEINBRPT"/>
</dbReference>
<dbReference type="SMART" id="SM00320">
    <property type="entry name" value="WD40"/>
    <property type="match status" value="7"/>
</dbReference>
<dbReference type="SUPFAM" id="SSF50978">
    <property type="entry name" value="WD40 repeat-like"/>
    <property type="match status" value="1"/>
</dbReference>
<dbReference type="PROSITE" id="PS00678">
    <property type="entry name" value="WD_REPEATS_1"/>
    <property type="match status" value="1"/>
</dbReference>
<dbReference type="PROSITE" id="PS50082">
    <property type="entry name" value="WD_REPEATS_2"/>
    <property type="match status" value="3"/>
</dbReference>
<dbReference type="PROSITE" id="PS50294">
    <property type="entry name" value="WD_REPEATS_REGION"/>
    <property type="match status" value="1"/>
</dbReference>
<evidence type="ECO:0000256" key="1">
    <source>
        <dbReference type="SAM" id="MobiDB-lite"/>
    </source>
</evidence>
<evidence type="ECO:0000305" key="2"/>
<organism>
    <name type="scientific">Xenopus laevis</name>
    <name type="common">African clawed frog</name>
    <dbReference type="NCBI Taxonomy" id="8355"/>
    <lineage>
        <taxon>Eukaryota</taxon>
        <taxon>Metazoa</taxon>
        <taxon>Chordata</taxon>
        <taxon>Craniata</taxon>
        <taxon>Vertebrata</taxon>
        <taxon>Euteleostomi</taxon>
        <taxon>Amphibia</taxon>
        <taxon>Batrachia</taxon>
        <taxon>Anura</taxon>
        <taxon>Pipoidea</taxon>
        <taxon>Pipidae</taxon>
        <taxon>Xenopodinae</taxon>
        <taxon>Xenopus</taxon>
        <taxon>Xenopus</taxon>
    </lineage>
</organism>
<sequence>MDENEDSSIAATMGFSGFGKKARTFDLEAMFEQTRRTAVERSKQTLEAREKEEQLSNKSPVIKGAPSSSGQKKTKASGSSSGSEDSSDDELIGPPLPPNVTGDHGDELIGPPLPPGYKDSDDEDDEEHEDDDNPVKDIPDSHEITLQHGTKTVSALGLDPSGARLVTGGYDYDVRFWDFAGMDASLQAFRSLQPCECHQIKSLQYSNTGDVILVVAGNSQAKVLDRDGFPVMECVKGDQYIVDMANTKGHTAMLNGGCWHPKIKEEFMTCSNDGTVRTWDVSNEKKHKGIFKPRSVQGKPVIPTCCTYSRDGKFIAAGCQDGSIQIWDRNMSVHTKFHCRQAHTPGTDTSCVTFSYGGNVLATRGGDDTLKTWDIRKFKNPLNVASGLENFFPMTDCCFSPDDKLLITGTSVKRGIGDGKLLFFDVVTFQKIYEIQVTEASVVRCLWHPKLNQIMVGTGNGLAKVYYDPNRSQRGAKLCVVKTQRKERQAETLTQDYIITPHALPMFREPRQRSTRKQLEKDRLDPVKSHKPEPPVAGPGRGGRVGTHGGTLSSFIVKNIALDKTDDSNAREAILRHAKDAEQNPYWVAPAYSKTQPNTVFAEVDSDEEEPDNEPEWKKRKI</sequence>
<comment type="similarity">
    <text evidence="2">Belongs to the WD repeat GAD-1 family.</text>
</comment>
<comment type="sequence caution" evidence="2">
    <conflict type="erroneous initiation">
        <sequence resource="EMBL-CDS" id="AAH73073"/>
    </conflict>
</comment>
<proteinExistence type="evidence at transcript level"/>
<reference key="1">
    <citation type="submission" date="2004-06" db="EMBL/GenBank/DDBJ databases">
        <authorList>
            <consortium name="NIH - Xenopus Gene Collection (XGC) project"/>
        </authorList>
    </citation>
    <scope>NUCLEOTIDE SEQUENCE [LARGE SCALE MRNA]</scope>
    <source>
        <tissue>Embryo</tissue>
    </source>
</reference>
<feature type="chain" id="PRO_0000305147" description="WD repeat-containing protein 70">
    <location>
        <begin position="1"/>
        <end position="622"/>
    </location>
</feature>
<feature type="repeat" description="WD 1">
    <location>
        <begin position="148"/>
        <end position="187"/>
    </location>
</feature>
<feature type="repeat" description="WD 2">
    <location>
        <begin position="195"/>
        <end position="236"/>
    </location>
</feature>
<feature type="repeat" description="WD 3">
    <location>
        <begin position="249"/>
        <end position="289"/>
    </location>
</feature>
<feature type="repeat" description="WD 4">
    <location>
        <begin position="298"/>
        <end position="337"/>
    </location>
</feature>
<feature type="repeat" description="WD 5">
    <location>
        <begin position="344"/>
        <end position="383"/>
    </location>
</feature>
<feature type="repeat" description="WD 6">
    <location>
        <begin position="387"/>
        <end position="434"/>
    </location>
</feature>
<feature type="repeat" description="WD 7">
    <location>
        <begin position="437"/>
        <end position="476"/>
    </location>
</feature>
<feature type="region of interest" description="Disordered" evidence="1">
    <location>
        <begin position="36"/>
        <end position="141"/>
    </location>
</feature>
<feature type="region of interest" description="Disordered" evidence="1">
    <location>
        <begin position="508"/>
        <end position="549"/>
    </location>
</feature>
<feature type="region of interest" description="Disordered" evidence="1">
    <location>
        <begin position="602"/>
        <end position="622"/>
    </location>
</feature>
<feature type="compositionally biased region" description="Basic and acidic residues" evidence="1">
    <location>
        <begin position="36"/>
        <end position="55"/>
    </location>
</feature>
<feature type="compositionally biased region" description="Low complexity" evidence="1">
    <location>
        <begin position="67"/>
        <end position="84"/>
    </location>
</feature>
<feature type="compositionally biased region" description="Acidic residues" evidence="1">
    <location>
        <begin position="120"/>
        <end position="132"/>
    </location>
</feature>
<feature type="compositionally biased region" description="Basic and acidic residues" evidence="1">
    <location>
        <begin position="508"/>
        <end position="533"/>
    </location>
</feature>
<feature type="compositionally biased region" description="Gly residues" evidence="1">
    <location>
        <begin position="539"/>
        <end position="549"/>
    </location>
</feature>
<feature type="compositionally biased region" description="Acidic residues" evidence="1">
    <location>
        <begin position="604"/>
        <end position="614"/>
    </location>
</feature>
<keyword id="KW-1185">Reference proteome</keyword>
<keyword id="KW-0677">Repeat</keyword>
<keyword id="KW-0853">WD repeat</keyword>
<accession>Q6GPP0</accession>